<protein>
    <recommendedName>
        <fullName>Fusion glycoprotein F0</fullName>
    </recommendedName>
    <component>
        <recommendedName>
            <fullName>Fusion glycoprotein F2</fullName>
        </recommendedName>
    </component>
    <component>
        <recommendedName>
            <fullName>Fusion glycoprotein F1</fullName>
        </recommendedName>
    </component>
</protein>
<gene>
    <name type="primary">F</name>
</gene>
<organismHost>
    <name type="scientific">Mus musculus</name>
    <name type="common">Mouse</name>
    <dbReference type="NCBI Taxonomy" id="10090"/>
</organismHost>
<feature type="signal peptide" evidence="3">
    <location>
        <begin position="1"/>
        <end position="21"/>
    </location>
</feature>
<feature type="chain" id="PRO_0000039348" description="Fusion glycoprotein F0">
    <location>
        <begin position="22"/>
        <end position="537"/>
    </location>
</feature>
<feature type="chain" id="PRO_0000039349" description="Fusion glycoprotein F2">
    <location>
        <begin position="22"/>
        <end position="101"/>
    </location>
</feature>
<feature type="chain" id="PRO_0000039350" description="Fusion glycoprotein F1">
    <location>
        <begin position="102"/>
        <end position="537"/>
    </location>
</feature>
<feature type="topological domain" description="Extracellular" evidence="1">
    <location>
        <begin position="26"/>
        <end position="486"/>
    </location>
</feature>
<feature type="transmembrane region" description="Helical" evidence="1">
    <location>
        <begin position="487"/>
        <end position="515"/>
    </location>
</feature>
<feature type="topological domain" description="Cytoplasmic" evidence="1">
    <location>
        <begin position="516"/>
        <end position="537"/>
    </location>
</feature>
<feature type="region of interest" description="Fusion peptide" evidence="2">
    <location>
        <begin position="102"/>
        <end position="122"/>
    </location>
</feature>
<feature type="coiled-coil region" evidence="3">
    <location>
        <begin position="120"/>
        <end position="174"/>
    </location>
</feature>
<feature type="coiled-coil region" evidence="3">
    <location>
        <begin position="444"/>
        <end position="479"/>
    </location>
</feature>
<feature type="site" description="Cleavage; by host furin-like protease" evidence="1">
    <location>
        <begin position="101"/>
        <end position="102"/>
    </location>
</feature>
<feature type="glycosylation site" description="N-linked (GlcNAc...) asparagine; by host" evidence="1">
    <location>
        <position position="463"/>
    </location>
</feature>
<feature type="disulfide bond" description="Interchain (between F2 and F1 chains)" evidence="1">
    <location>
        <begin position="33"/>
        <end position="402"/>
    </location>
</feature>
<feature type="disulfide bond" description="Interchain (between F2 and F1 chains)" evidence="1">
    <location>
        <begin position="65"/>
        <end position="177"/>
    </location>
</feature>
<feature type="disulfide bond" evidence="1">
    <location>
        <begin position="278"/>
        <end position="306"/>
    </location>
</feature>
<feature type="disulfide bond" evidence="1">
    <location>
        <begin position="287"/>
        <end position="296"/>
    </location>
</feature>
<feature type="disulfide bond" evidence="1">
    <location>
        <begin position="321"/>
        <end position="330"/>
    </location>
</feature>
<feature type="disulfide bond" evidence="1">
    <location>
        <begin position="345"/>
        <end position="356"/>
    </location>
</feature>
<feature type="disulfide bond" evidence="1">
    <location>
        <begin position="379"/>
        <end position="385"/>
    </location>
</feature>
<reference key="1">
    <citation type="journal article" date="1992" name="J. Gen. Virol.">
        <title>Sequence analysis of the gene encoding the fusion glycoprotein of pneumonia virus of mice suggests possible conserved secondary structure elements in paramyxovirus fusion glycoproteins.</title>
        <authorList>
            <person name="Chambers P."/>
            <person name="Pringle C.R."/>
            <person name="Easton A.J."/>
        </authorList>
    </citation>
    <scope>NUCLEOTIDE SEQUENCE [GENOMIC RNA]</scope>
</reference>
<reference key="2">
    <citation type="journal article" date="2005" name="J. Gen. Virol.">
        <title>Genome sequence of the non-pathogenic strain 15 of pneumonia virus of mice and comparison with the genome of the pathogenic strain J3666.</title>
        <authorList>
            <person name="Thorpe L.C."/>
            <person name="Easton A.J."/>
        </authorList>
    </citation>
    <scope>NUCLEOTIDE SEQUENCE [GENOMIC RNA]</scope>
</reference>
<evidence type="ECO:0000250" key="1">
    <source>
        <dbReference type="UniProtKB" id="P03420"/>
    </source>
</evidence>
<evidence type="ECO:0000250" key="2">
    <source>
        <dbReference type="UniProtKB" id="P11209"/>
    </source>
</evidence>
<evidence type="ECO:0000255" key="3"/>
<evidence type="ECO:0000305" key="4"/>
<comment type="function">
    <molecule>Fusion glycoprotein F0</molecule>
    <text evidence="1">Inactive precursor that is cleaved by a furin-like protease to give rise to the mature F1 and F2 fusion glycoproteins.</text>
</comment>
<comment type="function">
    <molecule>Fusion glycoprotein F1</molecule>
    <text evidence="1">Class I viral fusion protein. Under the current model, the protein has at least 3 conformational states: pre-fusion native state, pre-hairpin intermediate state, and post-fusion hairpin state. During viral and plasma cell membrane fusion, the coiled coil regions assume a trimer-of-hairpins structure, positioning the fusion peptide in close proximity to the C-terminal region of the ectodomain. The formation of this structure appears to drive apposition and subsequent fusion of viral and cellular membranes leading to delivery of the nucleocapsid into the cytoplasm. This fusion is pH independent and occurs at the plasma or endosomal membrane. The trimer of F1-F2 (F protein) also facilitates the attachment and entry into the host cell. Later in infection, F protein expressed at the plasma membrane of infected cells can mediate fusion with adjacent cells to form syncytia, a cytopathic effect that could lead to tissue necrosis.</text>
</comment>
<comment type="function">
    <molecule>Fusion glycoprotein F2</molecule>
    <text evidence="1">Major determinant of the species specificity of RSV infection. The trimer of F1-F2 (F protein) also facilitates the attachment and entry into the host cell. Later in infection, F protein expressed at the plasma membrane of infected cells can mediate fusion with adjacent cells to form syncytia, a cytopathic effect that could lead to tissue necrosis.</text>
</comment>
<comment type="subunit">
    <molecule>Fusion glycoprotein F1</molecule>
    <text evidence="1">Homotrimer. Heterodimer with fusion protein F2; disulfide-linked. Part of a complex composed of F1, F2 and G glycoproteins.</text>
</comment>
<comment type="subunit">
    <molecule>Fusion glycoprotein F2</molecule>
    <text evidence="1">Homotrimer. Heterodimer with fusion protein F1; disulfide-linked. Part of a complex composed of F1, F2 and G glycoproteins.</text>
</comment>
<comment type="subcellular location">
    <molecule>Fusion glycoprotein F0</molecule>
    <subcellularLocation>
        <location evidence="1">Host Golgi apparatus membrane</location>
        <topology evidence="1">Single-pass membrane protein</topology>
    </subcellularLocation>
</comment>
<comment type="subcellular location">
    <molecule>Fusion glycoprotein F1</molecule>
    <subcellularLocation>
        <location evidence="1">Virion membrane</location>
        <topology evidence="1">Single-pass type I membrane protein</topology>
    </subcellularLocation>
    <subcellularLocation>
        <location evidence="1">Host cell membrane</location>
        <topology evidence="1">Single-pass membrane protein</topology>
    </subcellularLocation>
    <text evidence="1">Localized at the host apical membrane.</text>
</comment>
<comment type="subcellular location">
    <molecule>Fusion glycoprotein F2</molecule>
    <subcellularLocation>
        <location evidence="1">Virion membrane</location>
    </subcellularLocation>
    <subcellularLocation>
        <location evidence="1">Host cell membrane</location>
    </subcellularLocation>
    <text evidence="1">Localized at the host apical membrane.</text>
</comment>
<comment type="domain">
    <molecule>Fusion glycoprotein F0</molecule>
    <text evidence="1 2">The N-terminus is a hydrophobic fusion peptide that inserts into the target host membrane (By similarity). It is buried in the center of the trimer cavity before cleavage by host furin. The coiled coil (heptad repeat) regions are probably involved in homotrimerization, heterodimerization and in the formation of a fusion-active hairpin structure (By similarity).</text>
</comment>
<comment type="domain">
    <molecule>Fusion glycoprotein F1</molecule>
    <text evidence="1 2">The N-terminus is a hydrophobic fusion peptide that inserts into the target host membrane (By similarity). It is buried in the center of the trimer cavity before cleavage by host furin. The coiled coil (heptad repeat) regions are probably involved in homotrimerization, heterodimerization and in the formation of a fusion-active hairpin structure (By similarity).</text>
</comment>
<comment type="PTM">
    <molecule>Fusion glycoprotein F0</molecule>
    <text evidence="1">The F glycoprotein is synthesized as a F0 inactive precursor that is heavily N-glycosylated and processed by a host furin-like protease probably in the Golgi.</text>
</comment>
<comment type="similarity">
    <text evidence="4">Belongs to the paramyxoviruses fusion glycoprotein family.</text>
</comment>
<sequence>MIPGRIFLVLLVIFNTKPIHPNTLTEKYYESTCSVETAGYKSALRTGWHMTVMSIKLSQINIESCKSSNSLLAHELAIYSSAVDELRTLSSNALKSKRKKRFLGLILGLGAAVTAGVALAKTVQLESEIALIRDAVRNTNEAVVSLTNGMSVLAKVVDDLKNFISKELLPKINRVSCDVHDITAVIRFQQLNKRLLEVSREFSSNAGLTHTVSSFMLTDRELTSIVGGMAVSAGQKEIMLSSKAIMRRNGLAILSSVNADTLVYVIQLPLFGVMDTDCWVIRSSIDCHNIADKYACLARADNGWYCHNAGSLSYFPSPTDCEIHNGYAFCDTLKSLTVPVTSRECNSNMYTTNYDCKISTSKTYVSTAVLTTMGCLVSCYGHNSCTVINNDKGIIRTLPDGCHYISNKGVDRVQVGNTVYYLSKEVGKSIVVRGEPLVLKYDPLSFPDDKFDVAIRDVEHSINQTRTFFKASDQLLDLSENRENKNLNKSYILTTLLFVVMLIIIMAVIGFILYKVLKMIRDNKLKSKSTPGLTVLS</sequence>
<keyword id="KW-0165">Cleavage on pair of basic residues</keyword>
<keyword id="KW-0175">Coiled coil</keyword>
<keyword id="KW-1015">Disulfide bond</keyword>
<keyword id="KW-1169">Fusion of virus membrane with host cell membrane</keyword>
<keyword id="KW-1168">Fusion of virus membrane with host membrane</keyword>
<keyword id="KW-0325">Glycoprotein</keyword>
<keyword id="KW-1032">Host cell membrane</keyword>
<keyword id="KW-1040">Host Golgi apparatus</keyword>
<keyword id="KW-1043">Host membrane</keyword>
<keyword id="KW-0945">Host-virus interaction</keyword>
<keyword id="KW-0472">Membrane</keyword>
<keyword id="KW-1185">Reference proteome</keyword>
<keyword id="KW-0732">Signal</keyword>
<keyword id="KW-0812">Transmembrane</keyword>
<keyword id="KW-1133">Transmembrane helix</keyword>
<keyword id="KW-1161">Viral attachment to host cell</keyword>
<keyword id="KW-1234">Viral attachment to host entry receptor</keyword>
<keyword id="KW-0261">Viral envelope protein</keyword>
<keyword id="KW-1162">Viral penetration into host cytoplasm</keyword>
<keyword id="KW-0946">Virion</keyword>
<keyword id="KW-1160">Virus entry into host cell</keyword>
<proteinExistence type="inferred from homology"/>
<name>FUS_MPV15</name>
<dbReference type="EMBL" id="AY743910">
    <property type="protein sequence ID" value="AAW02840.1"/>
    <property type="molecule type" value="Genomic_RNA"/>
</dbReference>
<dbReference type="PIR" id="JQ1619">
    <property type="entry name" value="JQ1619"/>
</dbReference>
<dbReference type="SMR" id="P35949"/>
<dbReference type="GlyCosmos" id="P35949">
    <property type="glycosylation" value="1 site, No reported glycans"/>
</dbReference>
<dbReference type="Proteomes" id="UP000133604">
    <property type="component" value="Genome"/>
</dbReference>
<dbReference type="GO" id="GO:0044178">
    <property type="term" value="C:host cell Golgi membrane"/>
    <property type="evidence" value="ECO:0007669"/>
    <property type="project" value="UniProtKB-SubCell"/>
</dbReference>
<dbReference type="GO" id="GO:0020002">
    <property type="term" value="C:host cell plasma membrane"/>
    <property type="evidence" value="ECO:0007669"/>
    <property type="project" value="UniProtKB-SubCell"/>
</dbReference>
<dbReference type="GO" id="GO:0016020">
    <property type="term" value="C:membrane"/>
    <property type="evidence" value="ECO:0007669"/>
    <property type="project" value="UniProtKB-KW"/>
</dbReference>
<dbReference type="GO" id="GO:0019031">
    <property type="term" value="C:viral envelope"/>
    <property type="evidence" value="ECO:0007669"/>
    <property type="project" value="UniProtKB-KW"/>
</dbReference>
<dbReference type="GO" id="GO:0055036">
    <property type="term" value="C:virion membrane"/>
    <property type="evidence" value="ECO:0007669"/>
    <property type="project" value="UniProtKB-SubCell"/>
</dbReference>
<dbReference type="GO" id="GO:0098670">
    <property type="term" value="P:entry receptor-mediated virion attachment to host cell"/>
    <property type="evidence" value="ECO:0007669"/>
    <property type="project" value="UniProtKB-KW"/>
</dbReference>
<dbReference type="GO" id="GO:0019064">
    <property type="term" value="P:fusion of virus membrane with host plasma membrane"/>
    <property type="evidence" value="ECO:0007669"/>
    <property type="project" value="UniProtKB-KW"/>
</dbReference>
<dbReference type="GO" id="GO:0046718">
    <property type="term" value="P:symbiont entry into host cell"/>
    <property type="evidence" value="ECO:0007669"/>
    <property type="project" value="UniProtKB-KW"/>
</dbReference>
<dbReference type="Gene3D" id="1.10.287.2480">
    <property type="match status" value="2"/>
</dbReference>
<dbReference type="InterPro" id="IPR000776">
    <property type="entry name" value="Fusion_F0_Paramyxovir"/>
</dbReference>
<dbReference type="Pfam" id="PF00523">
    <property type="entry name" value="Fusion_gly"/>
    <property type="match status" value="1"/>
</dbReference>
<dbReference type="SUPFAM" id="SSF58069">
    <property type="entry name" value="Virus ectodomain"/>
    <property type="match status" value="2"/>
</dbReference>
<accession>P35949</accession>
<accession>Q5MKM2</accession>
<organism>
    <name type="scientific">Murine pneumonia virus (strain 15)</name>
    <name type="common">MPV</name>
    <dbReference type="NCBI Taxonomy" id="296738"/>
    <lineage>
        <taxon>Viruses</taxon>
        <taxon>Riboviria</taxon>
        <taxon>Orthornavirae</taxon>
        <taxon>Negarnaviricota</taxon>
        <taxon>Haploviricotina</taxon>
        <taxon>Monjiviricetes</taxon>
        <taxon>Mononegavirales</taxon>
        <taxon>Pneumoviridae</taxon>
        <taxon>Orthopneumovirus</taxon>
        <taxon>Orthopneumovirus muris</taxon>
        <taxon>murine pneumonia virus</taxon>
    </lineage>
</organism>